<organism>
    <name type="scientific">Yersinia enterocolitica serotype O:8 / biotype 1B (strain NCTC 13174 / 8081)</name>
    <dbReference type="NCBI Taxonomy" id="393305"/>
    <lineage>
        <taxon>Bacteria</taxon>
        <taxon>Pseudomonadati</taxon>
        <taxon>Pseudomonadota</taxon>
        <taxon>Gammaproteobacteria</taxon>
        <taxon>Enterobacterales</taxon>
        <taxon>Yersiniaceae</taxon>
        <taxon>Yersinia</taxon>
    </lineage>
</organism>
<comment type="function">
    <text evidence="1">Catalyzes the transamination of N(2)-succinylornithine and alpha-ketoglutarate into N(2)-succinylglutamate semialdehyde and glutamate. Can also act as an acetylornithine aminotransferase.</text>
</comment>
<comment type="catalytic activity">
    <reaction evidence="1">
        <text>N(2)-succinyl-L-ornithine + 2-oxoglutarate = N-succinyl-L-glutamate 5-semialdehyde + L-glutamate</text>
        <dbReference type="Rhea" id="RHEA:16953"/>
        <dbReference type="ChEBI" id="CHEBI:16810"/>
        <dbReference type="ChEBI" id="CHEBI:29985"/>
        <dbReference type="ChEBI" id="CHEBI:58514"/>
        <dbReference type="ChEBI" id="CHEBI:58520"/>
        <dbReference type="EC" id="2.6.1.81"/>
    </reaction>
</comment>
<comment type="cofactor">
    <cofactor evidence="1">
        <name>pyridoxal 5'-phosphate</name>
        <dbReference type="ChEBI" id="CHEBI:597326"/>
    </cofactor>
</comment>
<comment type="pathway">
    <text evidence="1">Amino-acid degradation; L-arginine degradation via AST pathway; L-glutamate and succinate from L-arginine: step 3/5.</text>
</comment>
<comment type="similarity">
    <text evidence="1">Belongs to the class-III pyridoxal-phosphate-dependent aminotransferase family. AstC subfamily.</text>
</comment>
<feature type="chain" id="PRO_1000164399" description="Succinylornithine transaminase">
    <location>
        <begin position="1"/>
        <end position="414"/>
    </location>
</feature>
<feature type="modified residue" description="N6-(pyridoxal phosphate)lysine" evidence="1">
    <location>
        <position position="260"/>
    </location>
</feature>
<sequence>MEQPIPVTRQSFDEWIVPTYAPADFIVVRGEGATLWDQQGKSYIDFAGGIAVNALGHGHPAVKAALIEQADKVWHLGNGYTNEPVLRLAKQLIDATFAEKVFFCNSGAEANEAALKLARKYALDNFANKPGQQGEKNQIVAFRNAFHGRTLFTVSAGGQPKYSQDFAPLPGGISHGIFNDLASAEALITDQTCAVIVEPIQGEGGVLPADSEFLHGLRALCDRHNAVLIFDEVQTGVGRTGELYAYMHYGVTPDVLTSAKALGGGFPIAAMLTTTKYASALNVGSHGTTYGGNPLACAVAGTVLSLINTPAVLSGVKERHQWFLEGLADINARYKVFAEIRGRGLLIGCVLNSDYAGKSKDIIQAAAQHGIIALIAGPDVVRFAPSLIISQHDIKEGLARLAMGIEQVCRKAKS</sequence>
<reference key="1">
    <citation type="journal article" date="2006" name="PLoS Genet.">
        <title>The complete genome sequence and comparative genome analysis of the high pathogenicity Yersinia enterocolitica strain 8081.</title>
        <authorList>
            <person name="Thomson N.R."/>
            <person name="Howard S."/>
            <person name="Wren B.W."/>
            <person name="Holden M.T.G."/>
            <person name="Crossman L."/>
            <person name="Challis G.L."/>
            <person name="Churcher C."/>
            <person name="Mungall K."/>
            <person name="Brooks K."/>
            <person name="Chillingworth T."/>
            <person name="Feltwell T."/>
            <person name="Abdellah Z."/>
            <person name="Hauser H."/>
            <person name="Jagels K."/>
            <person name="Maddison M."/>
            <person name="Moule S."/>
            <person name="Sanders M."/>
            <person name="Whitehead S."/>
            <person name="Quail M.A."/>
            <person name="Dougan G."/>
            <person name="Parkhill J."/>
            <person name="Prentice M.B."/>
        </authorList>
    </citation>
    <scope>NUCLEOTIDE SEQUENCE [LARGE SCALE GENOMIC DNA]</scope>
    <source>
        <strain>NCTC 13174 / 8081</strain>
    </source>
</reference>
<accession>A1JS45</accession>
<name>ASTC_YERE8</name>
<gene>
    <name evidence="1" type="primary">astC</name>
    <name evidence="1" type="synonym">argM</name>
    <name type="ordered locus">YE2469</name>
</gene>
<keyword id="KW-0032">Aminotransferase</keyword>
<keyword id="KW-0056">Arginine metabolism</keyword>
<keyword id="KW-0663">Pyridoxal phosphate</keyword>
<keyword id="KW-0808">Transferase</keyword>
<protein>
    <recommendedName>
        <fullName evidence="1">Succinylornithine transaminase</fullName>
        <ecNumber evidence="1">2.6.1.81</ecNumber>
    </recommendedName>
    <alternativeName>
        <fullName evidence="1">Succinylornithine aminotransferase</fullName>
    </alternativeName>
</protein>
<proteinExistence type="inferred from homology"/>
<dbReference type="EC" id="2.6.1.81" evidence="1"/>
<dbReference type="EMBL" id="AM286415">
    <property type="protein sequence ID" value="CAL12512.1"/>
    <property type="molecule type" value="Genomic_DNA"/>
</dbReference>
<dbReference type="RefSeq" id="WP_011816560.1">
    <property type="nucleotide sequence ID" value="NC_008800.1"/>
</dbReference>
<dbReference type="RefSeq" id="YP_001006676.1">
    <property type="nucleotide sequence ID" value="NC_008800.1"/>
</dbReference>
<dbReference type="SMR" id="A1JS45"/>
<dbReference type="KEGG" id="yen:YE2469"/>
<dbReference type="PATRIC" id="fig|393305.7.peg.2620"/>
<dbReference type="eggNOG" id="COG4992">
    <property type="taxonomic scope" value="Bacteria"/>
</dbReference>
<dbReference type="HOGENOM" id="CLU_016922_10_1_6"/>
<dbReference type="OrthoDB" id="9801052at2"/>
<dbReference type="UniPathway" id="UPA00185">
    <property type="reaction ID" value="UER00281"/>
</dbReference>
<dbReference type="Proteomes" id="UP000000642">
    <property type="component" value="Chromosome"/>
</dbReference>
<dbReference type="GO" id="GO:0042802">
    <property type="term" value="F:identical protein binding"/>
    <property type="evidence" value="ECO:0007669"/>
    <property type="project" value="TreeGrafter"/>
</dbReference>
<dbReference type="GO" id="GO:0030170">
    <property type="term" value="F:pyridoxal phosphate binding"/>
    <property type="evidence" value="ECO:0007669"/>
    <property type="project" value="UniProtKB-UniRule"/>
</dbReference>
<dbReference type="GO" id="GO:0043825">
    <property type="term" value="F:succinylornithine transaminase activity"/>
    <property type="evidence" value="ECO:0007669"/>
    <property type="project" value="UniProtKB-EC"/>
</dbReference>
<dbReference type="GO" id="GO:1901607">
    <property type="term" value="P:alpha-amino acid biosynthetic process"/>
    <property type="evidence" value="ECO:0007669"/>
    <property type="project" value="UniProtKB-ARBA"/>
</dbReference>
<dbReference type="GO" id="GO:0019544">
    <property type="term" value="P:arginine catabolic process to glutamate"/>
    <property type="evidence" value="ECO:0007669"/>
    <property type="project" value="UniProtKB-UniRule"/>
</dbReference>
<dbReference type="GO" id="GO:0019545">
    <property type="term" value="P:arginine catabolic process to succinate"/>
    <property type="evidence" value="ECO:0007669"/>
    <property type="project" value="UniProtKB-UniRule"/>
</dbReference>
<dbReference type="GO" id="GO:0006593">
    <property type="term" value="P:ornithine catabolic process"/>
    <property type="evidence" value="ECO:0007669"/>
    <property type="project" value="InterPro"/>
</dbReference>
<dbReference type="CDD" id="cd00610">
    <property type="entry name" value="OAT_like"/>
    <property type="match status" value="1"/>
</dbReference>
<dbReference type="FunFam" id="3.40.640.10:FF:000004">
    <property type="entry name" value="Acetylornithine aminotransferase"/>
    <property type="match status" value="1"/>
</dbReference>
<dbReference type="Gene3D" id="3.90.1150.10">
    <property type="entry name" value="Aspartate Aminotransferase, domain 1"/>
    <property type="match status" value="1"/>
</dbReference>
<dbReference type="Gene3D" id="3.40.640.10">
    <property type="entry name" value="Type I PLP-dependent aspartate aminotransferase-like (Major domain)"/>
    <property type="match status" value="1"/>
</dbReference>
<dbReference type="HAMAP" id="MF_01107">
    <property type="entry name" value="ArgD_aminotrans_3"/>
    <property type="match status" value="1"/>
</dbReference>
<dbReference type="HAMAP" id="MF_01173">
    <property type="entry name" value="AstC_aminotrans_3"/>
    <property type="match status" value="1"/>
</dbReference>
<dbReference type="InterPro" id="IPR017652">
    <property type="entry name" value="Ac/SucOrn_transaminase_bac"/>
</dbReference>
<dbReference type="InterPro" id="IPR004636">
    <property type="entry name" value="AcOrn/SuccOrn_fam"/>
</dbReference>
<dbReference type="InterPro" id="IPR005814">
    <property type="entry name" value="Aminotrans_3"/>
</dbReference>
<dbReference type="InterPro" id="IPR049704">
    <property type="entry name" value="Aminotrans_3_PPA_site"/>
</dbReference>
<dbReference type="InterPro" id="IPR050103">
    <property type="entry name" value="Class-III_PLP-dep_AT"/>
</dbReference>
<dbReference type="InterPro" id="IPR015424">
    <property type="entry name" value="PyrdxlP-dep_Trfase"/>
</dbReference>
<dbReference type="InterPro" id="IPR015421">
    <property type="entry name" value="PyrdxlP-dep_Trfase_major"/>
</dbReference>
<dbReference type="InterPro" id="IPR015422">
    <property type="entry name" value="PyrdxlP-dep_Trfase_small"/>
</dbReference>
<dbReference type="InterPro" id="IPR026330">
    <property type="entry name" value="SOAT"/>
</dbReference>
<dbReference type="NCBIfam" id="TIGR03246">
    <property type="entry name" value="arg_catab_astC"/>
    <property type="match status" value="1"/>
</dbReference>
<dbReference type="NCBIfam" id="TIGR00707">
    <property type="entry name" value="argD"/>
    <property type="match status" value="1"/>
</dbReference>
<dbReference type="NCBIfam" id="NF002325">
    <property type="entry name" value="PRK01278.1"/>
    <property type="match status" value="1"/>
</dbReference>
<dbReference type="NCBIfam" id="NF003468">
    <property type="entry name" value="PRK05093.1"/>
    <property type="match status" value="1"/>
</dbReference>
<dbReference type="NCBIfam" id="NF009047">
    <property type="entry name" value="PRK12381.1"/>
    <property type="match status" value="1"/>
</dbReference>
<dbReference type="PANTHER" id="PTHR11986">
    <property type="entry name" value="AMINOTRANSFERASE CLASS III"/>
    <property type="match status" value="1"/>
</dbReference>
<dbReference type="PANTHER" id="PTHR11986:SF113">
    <property type="entry name" value="SUCCINYLORNITHINE TRANSAMINASE"/>
    <property type="match status" value="1"/>
</dbReference>
<dbReference type="Pfam" id="PF00202">
    <property type="entry name" value="Aminotran_3"/>
    <property type="match status" value="1"/>
</dbReference>
<dbReference type="PIRSF" id="PIRSF000521">
    <property type="entry name" value="Transaminase_4ab_Lys_Orn"/>
    <property type="match status" value="1"/>
</dbReference>
<dbReference type="SUPFAM" id="SSF53383">
    <property type="entry name" value="PLP-dependent transferases"/>
    <property type="match status" value="1"/>
</dbReference>
<dbReference type="PROSITE" id="PS00600">
    <property type="entry name" value="AA_TRANSFER_CLASS_3"/>
    <property type="match status" value="1"/>
</dbReference>
<evidence type="ECO:0000255" key="1">
    <source>
        <dbReference type="HAMAP-Rule" id="MF_01173"/>
    </source>
</evidence>